<dbReference type="EMBL" id="AE016795">
    <property type="protein sequence ID" value="AAO09790.1"/>
    <property type="molecule type" value="Genomic_DNA"/>
</dbReference>
<dbReference type="RefSeq" id="WP_011079315.1">
    <property type="nucleotide sequence ID" value="NC_004459.3"/>
</dbReference>
<dbReference type="SMR" id="Q8DCR0"/>
<dbReference type="GeneID" id="93895604"/>
<dbReference type="KEGG" id="vvu:VV1_1336"/>
<dbReference type="HOGENOM" id="CLU_104295_1_2_6"/>
<dbReference type="Proteomes" id="UP000002275">
    <property type="component" value="Chromosome 1"/>
</dbReference>
<dbReference type="GO" id="GO:0015935">
    <property type="term" value="C:small ribosomal subunit"/>
    <property type="evidence" value="ECO:0007669"/>
    <property type="project" value="InterPro"/>
</dbReference>
<dbReference type="GO" id="GO:0019843">
    <property type="term" value="F:rRNA binding"/>
    <property type="evidence" value="ECO:0007669"/>
    <property type="project" value="UniProtKB-UniRule"/>
</dbReference>
<dbReference type="GO" id="GO:0003735">
    <property type="term" value="F:structural constituent of ribosome"/>
    <property type="evidence" value="ECO:0007669"/>
    <property type="project" value="InterPro"/>
</dbReference>
<dbReference type="GO" id="GO:0000049">
    <property type="term" value="F:tRNA binding"/>
    <property type="evidence" value="ECO:0007669"/>
    <property type="project" value="UniProtKB-UniRule"/>
</dbReference>
<dbReference type="GO" id="GO:0006412">
    <property type="term" value="P:translation"/>
    <property type="evidence" value="ECO:0007669"/>
    <property type="project" value="UniProtKB-UniRule"/>
</dbReference>
<dbReference type="CDD" id="cd03368">
    <property type="entry name" value="Ribosomal_S12"/>
    <property type="match status" value="1"/>
</dbReference>
<dbReference type="FunFam" id="2.40.50.140:FF:000001">
    <property type="entry name" value="30S ribosomal protein S12"/>
    <property type="match status" value="1"/>
</dbReference>
<dbReference type="Gene3D" id="2.40.50.140">
    <property type="entry name" value="Nucleic acid-binding proteins"/>
    <property type="match status" value="1"/>
</dbReference>
<dbReference type="HAMAP" id="MF_00403_B">
    <property type="entry name" value="Ribosomal_uS12_B"/>
    <property type="match status" value="1"/>
</dbReference>
<dbReference type="InterPro" id="IPR012340">
    <property type="entry name" value="NA-bd_OB-fold"/>
</dbReference>
<dbReference type="InterPro" id="IPR006032">
    <property type="entry name" value="Ribosomal_uS12"/>
</dbReference>
<dbReference type="InterPro" id="IPR005679">
    <property type="entry name" value="Ribosomal_uS12_bac"/>
</dbReference>
<dbReference type="NCBIfam" id="TIGR00981">
    <property type="entry name" value="rpsL_bact"/>
    <property type="match status" value="1"/>
</dbReference>
<dbReference type="PANTHER" id="PTHR11652">
    <property type="entry name" value="30S RIBOSOMAL PROTEIN S12 FAMILY MEMBER"/>
    <property type="match status" value="1"/>
</dbReference>
<dbReference type="Pfam" id="PF00164">
    <property type="entry name" value="Ribosom_S12_S23"/>
    <property type="match status" value="1"/>
</dbReference>
<dbReference type="PIRSF" id="PIRSF002133">
    <property type="entry name" value="Ribosomal_S12/S23"/>
    <property type="match status" value="1"/>
</dbReference>
<dbReference type="PRINTS" id="PR01034">
    <property type="entry name" value="RIBOSOMALS12"/>
</dbReference>
<dbReference type="SUPFAM" id="SSF50249">
    <property type="entry name" value="Nucleic acid-binding proteins"/>
    <property type="match status" value="1"/>
</dbReference>
<dbReference type="PROSITE" id="PS00055">
    <property type="entry name" value="RIBOSOMAL_S12"/>
    <property type="match status" value="1"/>
</dbReference>
<comment type="function">
    <text evidence="2">With S4 and S5 plays an important role in translational accuracy.</text>
</comment>
<comment type="function">
    <text evidence="2">Interacts with and stabilizes bases of the 16S rRNA that are involved in tRNA selection in the A site and with the mRNA backbone. Located at the interface of the 30S and 50S subunits, it traverses the body of the 30S subunit contacting proteins on the other side and probably holding the rRNA structure together. The combined cluster of proteins S8, S12 and S17 appears to hold together the shoulder and platform of the 30S subunit.</text>
</comment>
<comment type="subunit">
    <text evidence="2">Part of the 30S ribosomal subunit. Contacts proteins S8 and S17. May interact with IF1 in the 30S initiation complex.</text>
</comment>
<comment type="similarity">
    <text evidence="2">Belongs to the universal ribosomal protein uS12 family.</text>
</comment>
<gene>
    <name evidence="2" type="primary">rpsL</name>
    <name type="ordered locus">VV1_1336</name>
</gene>
<proteinExistence type="inferred from homology"/>
<name>RS12_VIBVU</name>
<keyword id="KW-0488">Methylation</keyword>
<keyword id="KW-0687">Ribonucleoprotein</keyword>
<keyword id="KW-0689">Ribosomal protein</keyword>
<keyword id="KW-0694">RNA-binding</keyword>
<keyword id="KW-0699">rRNA-binding</keyword>
<keyword id="KW-0820">tRNA-binding</keyword>
<protein>
    <recommendedName>
        <fullName evidence="2">Small ribosomal subunit protein uS12</fullName>
    </recommendedName>
    <alternativeName>
        <fullName evidence="3">30S ribosomal protein S12</fullName>
    </alternativeName>
</protein>
<evidence type="ECO:0000250" key="1"/>
<evidence type="ECO:0000255" key="2">
    <source>
        <dbReference type="HAMAP-Rule" id="MF_00403"/>
    </source>
</evidence>
<evidence type="ECO:0000305" key="3"/>
<sequence length="124" mass="13708">MATINQLVRKPRAKQVVKSNVPALEACPQKRGVCTRVYTTTPKKPNSALRKVCRVRLTNGFEVTSYIGGEGHNLQEHSVVLIRGGRVKDLPGVRYHTVRGALDCAGVNNRKQGRSKYGVKRPKS</sequence>
<accession>Q8DCR0</accession>
<reference key="1">
    <citation type="submission" date="2002-12" db="EMBL/GenBank/DDBJ databases">
        <title>Complete genome sequence of Vibrio vulnificus CMCP6.</title>
        <authorList>
            <person name="Rhee J.H."/>
            <person name="Kim S.Y."/>
            <person name="Chung S.S."/>
            <person name="Kim J.J."/>
            <person name="Moon Y.H."/>
            <person name="Jeong H."/>
            <person name="Choy H.E."/>
        </authorList>
    </citation>
    <scope>NUCLEOTIDE SEQUENCE [LARGE SCALE GENOMIC DNA]</scope>
    <source>
        <strain>CMCP6</strain>
    </source>
</reference>
<feature type="chain" id="PRO_0000146352" description="Small ribosomal subunit protein uS12">
    <location>
        <begin position="1"/>
        <end position="124"/>
    </location>
</feature>
<feature type="modified residue" description="3-methylthioaspartic acid" evidence="1">
    <location>
        <position position="89"/>
    </location>
</feature>
<organism>
    <name type="scientific">Vibrio vulnificus (strain CMCP6)</name>
    <dbReference type="NCBI Taxonomy" id="216895"/>
    <lineage>
        <taxon>Bacteria</taxon>
        <taxon>Pseudomonadati</taxon>
        <taxon>Pseudomonadota</taxon>
        <taxon>Gammaproteobacteria</taxon>
        <taxon>Vibrionales</taxon>
        <taxon>Vibrionaceae</taxon>
        <taxon>Vibrio</taxon>
    </lineage>
</organism>